<sequence length="318" mass="35631">MFLVNLLLMIIPILLAVAFLTLLERKTLGYMQLRKGPNIVGPHGLLQPIADAIKLFTKEPLRPLTSSTSMFIMAPILALSLALTMWTPLPMPYPLINMNLGVLFILAMSSLAVYSILWSGWASNSKYALIGALRAVAQTISYEVTLAIILLSVLLMSGSFSLPNLSTTQENLWLIIPAWPLAMMWFISTLAETNRAPFDLTEGESELVSGFNVEYAGGSFALFFLAEYANIIMMNAITTTLFLGLYQNPSLPEFYTTSFMIKTLLMTITFLWIRASYPRFRYDQLMHLLWKNFLPLTLALCMWHVSIPILTASIPPQT</sequence>
<protein>
    <recommendedName>
        <fullName>NADH-ubiquinone oxidoreductase chain 1</fullName>
        <ecNumber evidence="1">7.1.1.2</ecNumber>
    </recommendedName>
    <alternativeName>
        <fullName>NADH dehydrogenase subunit 1</fullName>
    </alternativeName>
</protein>
<accession>Q8M893</accession>
<gene>
    <name type="primary">MT-ND1</name>
    <name type="synonym">MTND1</name>
    <name type="synonym">NADH1</name>
    <name type="synonym">ND1</name>
</gene>
<evidence type="ECO:0000250" key="1">
    <source>
        <dbReference type="UniProtKB" id="P03886"/>
    </source>
</evidence>
<evidence type="ECO:0000250" key="2">
    <source>
        <dbReference type="UniProtKB" id="P03887"/>
    </source>
</evidence>
<evidence type="ECO:0000255" key="3"/>
<evidence type="ECO:0000305" key="4"/>
<feature type="chain" id="PRO_0000117402" description="NADH-ubiquinone oxidoreductase chain 1">
    <location>
        <begin position="1"/>
        <end position="318"/>
    </location>
</feature>
<feature type="transmembrane region" description="Helical" evidence="3">
    <location>
        <begin position="2"/>
        <end position="22"/>
    </location>
</feature>
<feature type="transmembrane region" description="Helical" evidence="3">
    <location>
        <begin position="70"/>
        <end position="90"/>
    </location>
</feature>
<feature type="transmembrane region" description="Helical" evidence="3">
    <location>
        <begin position="100"/>
        <end position="120"/>
    </location>
</feature>
<feature type="transmembrane region" description="Helical" evidence="3">
    <location>
        <begin position="140"/>
        <end position="160"/>
    </location>
</feature>
<feature type="transmembrane region" description="Helical" evidence="3">
    <location>
        <begin position="172"/>
        <end position="192"/>
    </location>
</feature>
<feature type="transmembrane region" description="Helical" evidence="3">
    <location>
        <begin position="217"/>
        <end position="237"/>
    </location>
</feature>
<feature type="transmembrane region" description="Helical" evidence="3">
    <location>
        <begin position="253"/>
        <end position="273"/>
    </location>
</feature>
<feature type="transmembrane region" description="Helical" evidence="3">
    <location>
        <begin position="294"/>
        <end position="314"/>
    </location>
</feature>
<name>NU1M_EMBAL</name>
<organism>
    <name type="scientific">Emballonura alecto</name>
    <name type="common">Philippine sheath-tailed bat</name>
    <name type="synonym">Small Asian sheath-tailed bat</name>
    <dbReference type="NCBI Taxonomy" id="187004"/>
    <lineage>
        <taxon>Eukaryota</taxon>
        <taxon>Metazoa</taxon>
        <taxon>Chordata</taxon>
        <taxon>Craniata</taxon>
        <taxon>Vertebrata</taxon>
        <taxon>Euteleostomi</taxon>
        <taxon>Mammalia</taxon>
        <taxon>Eutheria</taxon>
        <taxon>Laurasiatheria</taxon>
        <taxon>Chiroptera</taxon>
        <taxon>Yangochiroptera</taxon>
        <taxon>Emballonuridae</taxon>
        <taxon>Emballonurinae</taxon>
        <taxon>Emballonura</taxon>
    </lineage>
</organism>
<keyword id="KW-0249">Electron transport</keyword>
<keyword id="KW-0472">Membrane</keyword>
<keyword id="KW-0496">Mitochondrion</keyword>
<keyword id="KW-0999">Mitochondrion inner membrane</keyword>
<keyword id="KW-0520">NAD</keyword>
<keyword id="KW-0679">Respiratory chain</keyword>
<keyword id="KW-1278">Translocase</keyword>
<keyword id="KW-0812">Transmembrane</keyword>
<keyword id="KW-1133">Transmembrane helix</keyword>
<keyword id="KW-0813">Transport</keyword>
<keyword id="KW-0830">Ubiquinone</keyword>
<proteinExistence type="inferred from homology"/>
<geneLocation type="mitochondrion"/>
<reference key="1">
    <citation type="journal article" date="2002" name="J. Mol. Evol.">
        <title>Intra- and interfamily relationships of Vespertilionidae inferred by various molecular markers including SINE insertion data.</title>
        <authorList>
            <person name="Kawai K."/>
            <person name="Nikaido M."/>
            <person name="Harada M."/>
            <person name="Matsumura S."/>
            <person name="Lin L.K."/>
            <person name="Wu Y."/>
            <person name="Hasegawa M."/>
            <person name="Okada N."/>
        </authorList>
    </citation>
    <scope>NUCLEOTIDE SEQUENCE [GENOMIC DNA]</scope>
</reference>
<comment type="function">
    <text evidence="1">Core subunit of the mitochondrial membrane respiratory chain NADH dehydrogenase (Complex I) which catalyzes electron transfer from NADH through the respiratory chain, using ubiquinone as an electron acceptor. Essential for the catalytic activity and assembly of complex I.</text>
</comment>
<comment type="catalytic activity">
    <reaction evidence="1">
        <text>a ubiquinone + NADH + 5 H(+)(in) = a ubiquinol + NAD(+) + 4 H(+)(out)</text>
        <dbReference type="Rhea" id="RHEA:29091"/>
        <dbReference type="Rhea" id="RHEA-COMP:9565"/>
        <dbReference type="Rhea" id="RHEA-COMP:9566"/>
        <dbReference type="ChEBI" id="CHEBI:15378"/>
        <dbReference type="ChEBI" id="CHEBI:16389"/>
        <dbReference type="ChEBI" id="CHEBI:17976"/>
        <dbReference type="ChEBI" id="CHEBI:57540"/>
        <dbReference type="ChEBI" id="CHEBI:57945"/>
        <dbReference type="EC" id="7.1.1.2"/>
    </reaction>
</comment>
<comment type="subunit">
    <text evidence="2">Core subunit of respiratory chain NADH dehydrogenase (Complex I) which is composed of 45 different subunits.</text>
</comment>
<comment type="subcellular location">
    <subcellularLocation>
        <location evidence="2">Mitochondrion inner membrane</location>
        <topology evidence="3">Multi-pass membrane protein</topology>
    </subcellularLocation>
</comment>
<comment type="similarity">
    <text evidence="4">Belongs to the complex I subunit 1 family.</text>
</comment>
<dbReference type="EC" id="7.1.1.2" evidence="1"/>
<dbReference type="EMBL" id="AB079808">
    <property type="protein sequence ID" value="BAB92033.1"/>
    <property type="molecule type" value="Genomic_DNA"/>
</dbReference>
<dbReference type="SMR" id="Q8M893"/>
<dbReference type="GO" id="GO:0005743">
    <property type="term" value="C:mitochondrial inner membrane"/>
    <property type="evidence" value="ECO:0000250"/>
    <property type="project" value="UniProtKB"/>
</dbReference>
<dbReference type="GO" id="GO:0008137">
    <property type="term" value="F:NADH dehydrogenase (ubiquinone) activity"/>
    <property type="evidence" value="ECO:0000250"/>
    <property type="project" value="UniProtKB"/>
</dbReference>
<dbReference type="GO" id="GO:0006120">
    <property type="term" value="P:mitochondrial electron transport, NADH to ubiquinone"/>
    <property type="evidence" value="ECO:0000250"/>
    <property type="project" value="UniProtKB"/>
</dbReference>
<dbReference type="GO" id="GO:0032981">
    <property type="term" value="P:mitochondrial respiratory chain complex I assembly"/>
    <property type="evidence" value="ECO:0000250"/>
    <property type="project" value="UniProtKB"/>
</dbReference>
<dbReference type="HAMAP" id="MF_01350">
    <property type="entry name" value="NDH1_NuoH"/>
    <property type="match status" value="1"/>
</dbReference>
<dbReference type="InterPro" id="IPR001694">
    <property type="entry name" value="NADH_UbQ_OxRdtase_su1/FPO"/>
</dbReference>
<dbReference type="InterPro" id="IPR018086">
    <property type="entry name" value="NADH_UbQ_OxRdtase_su1_CS"/>
</dbReference>
<dbReference type="PANTHER" id="PTHR11432">
    <property type="entry name" value="NADH DEHYDROGENASE SUBUNIT 1"/>
    <property type="match status" value="1"/>
</dbReference>
<dbReference type="PANTHER" id="PTHR11432:SF3">
    <property type="entry name" value="NADH-UBIQUINONE OXIDOREDUCTASE CHAIN 1"/>
    <property type="match status" value="1"/>
</dbReference>
<dbReference type="Pfam" id="PF00146">
    <property type="entry name" value="NADHdh"/>
    <property type="match status" value="1"/>
</dbReference>
<dbReference type="PROSITE" id="PS00667">
    <property type="entry name" value="COMPLEX1_ND1_1"/>
    <property type="match status" value="1"/>
</dbReference>
<dbReference type="PROSITE" id="PS00668">
    <property type="entry name" value="COMPLEX1_ND1_2"/>
    <property type="match status" value="1"/>
</dbReference>